<reference key="1">
    <citation type="journal article" date="2006" name="Proc. Natl. Acad. Sci. U.S.A.">
        <title>Genome reduction in Leptospira borgpetersenii reflects limited transmission potential.</title>
        <authorList>
            <person name="Bulach D.M."/>
            <person name="Zuerner R.L."/>
            <person name="Wilson P."/>
            <person name="Seemann T."/>
            <person name="McGrath A."/>
            <person name="Cullen P.A."/>
            <person name="Davis J."/>
            <person name="Johnson M."/>
            <person name="Kuczek E."/>
            <person name="Alt D.P."/>
            <person name="Peterson-Burch B."/>
            <person name="Coppel R.L."/>
            <person name="Rood J.I."/>
            <person name="Davies J.K."/>
            <person name="Adler B."/>
        </authorList>
    </citation>
    <scope>NUCLEOTIDE SEQUENCE [LARGE SCALE GENOMIC DNA]</scope>
    <source>
        <strain>L550</strain>
    </source>
</reference>
<feature type="chain" id="PRO_0000331846" description="Methionine--tRNA ligase">
    <location>
        <begin position="1"/>
        <end position="704"/>
    </location>
</feature>
<feature type="domain" description="tRNA-binding" evidence="1">
    <location>
        <begin position="603"/>
        <end position="704"/>
    </location>
</feature>
<feature type="short sequence motif" description="'HIGH' region">
    <location>
        <begin position="17"/>
        <end position="27"/>
    </location>
</feature>
<feature type="short sequence motif" description="'KMSKS' region">
    <location>
        <begin position="348"/>
        <end position="352"/>
    </location>
</feature>
<feature type="binding site" evidence="1">
    <location>
        <position position="148"/>
    </location>
    <ligand>
        <name>Zn(2+)</name>
        <dbReference type="ChEBI" id="CHEBI:29105"/>
    </ligand>
</feature>
<feature type="binding site" evidence="1">
    <location>
        <position position="151"/>
    </location>
    <ligand>
        <name>Zn(2+)</name>
        <dbReference type="ChEBI" id="CHEBI:29105"/>
    </ligand>
</feature>
<feature type="binding site" evidence="1">
    <location>
        <position position="161"/>
    </location>
    <ligand>
        <name>Zn(2+)</name>
        <dbReference type="ChEBI" id="CHEBI:29105"/>
    </ligand>
</feature>
<feature type="binding site" evidence="1">
    <location>
        <position position="164"/>
    </location>
    <ligand>
        <name>Zn(2+)</name>
        <dbReference type="ChEBI" id="CHEBI:29105"/>
    </ligand>
</feature>
<feature type="binding site" evidence="1">
    <location>
        <position position="351"/>
    </location>
    <ligand>
        <name>ATP</name>
        <dbReference type="ChEBI" id="CHEBI:30616"/>
    </ligand>
</feature>
<comment type="function">
    <text evidence="1">Is required not only for elongation of protein synthesis but also for the initiation of all mRNA translation through initiator tRNA(fMet) aminoacylation.</text>
</comment>
<comment type="catalytic activity">
    <reaction evidence="1">
        <text>tRNA(Met) + L-methionine + ATP = L-methionyl-tRNA(Met) + AMP + diphosphate</text>
        <dbReference type="Rhea" id="RHEA:13481"/>
        <dbReference type="Rhea" id="RHEA-COMP:9667"/>
        <dbReference type="Rhea" id="RHEA-COMP:9698"/>
        <dbReference type="ChEBI" id="CHEBI:30616"/>
        <dbReference type="ChEBI" id="CHEBI:33019"/>
        <dbReference type="ChEBI" id="CHEBI:57844"/>
        <dbReference type="ChEBI" id="CHEBI:78442"/>
        <dbReference type="ChEBI" id="CHEBI:78530"/>
        <dbReference type="ChEBI" id="CHEBI:456215"/>
        <dbReference type="EC" id="6.1.1.10"/>
    </reaction>
</comment>
<comment type="cofactor">
    <cofactor evidence="1">
        <name>Zn(2+)</name>
        <dbReference type="ChEBI" id="CHEBI:29105"/>
    </cofactor>
    <text evidence="1">Binds 1 zinc ion per subunit.</text>
</comment>
<comment type="subunit">
    <text evidence="1">Homodimer.</text>
</comment>
<comment type="subcellular location">
    <subcellularLocation>
        <location evidence="1">Cytoplasm</location>
    </subcellularLocation>
</comment>
<comment type="similarity">
    <text evidence="1">Belongs to the class-I aminoacyl-tRNA synthetase family. MetG type 1 subfamily.</text>
</comment>
<proteinExistence type="inferred from homology"/>
<accession>Q054R6</accession>
<evidence type="ECO:0000255" key="1">
    <source>
        <dbReference type="HAMAP-Rule" id="MF_00098"/>
    </source>
</evidence>
<dbReference type="EC" id="6.1.1.10" evidence="1"/>
<dbReference type="EMBL" id="CP000348">
    <property type="protein sequence ID" value="ABJ78179.1"/>
    <property type="molecule type" value="Genomic_DNA"/>
</dbReference>
<dbReference type="RefSeq" id="WP_011669526.1">
    <property type="nucleotide sequence ID" value="NC_008508.1"/>
</dbReference>
<dbReference type="SMR" id="Q054R6"/>
<dbReference type="KEGG" id="lbl:LBL_0593"/>
<dbReference type="HOGENOM" id="CLU_009710_7_0_12"/>
<dbReference type="GO" id="GO:0005829">
    <property type="term" value="C:cytosol"/>
    <property type="evidence" value="ECO:0007669"/>
    <property type="project" value="TreeGrafter"/>
</dbReference>
<dbReference type="GO" id="GO:0005524">
    <property type="term" value="F:ATP binding"/>
    <property type="evidence" value="ECO:0007669"/>
    <property type="project" value="UniProtKB-UniRule"/>
</dbReference>
<dbReference type="GO" id="GO:0046872">
    <property type="term" value="F:metal ion binding"/>
    <property type="evidence" value="ECO:0007669"/>
    <property type="project" value="UniProtKB-KW"/>
</dbReference>
<dbReference type="GO" id="GO:0004825">
    <property type="term" value="F:methionine-tRNA ligase activity"/>
    <property type="evidence" value="ECO:0007669"/>
    <property type="project" value="UniProtKB-UniRule"/>
</dbReference>
<dbReference type="GO" id="GO:0000049">
    <property type="term" value="F:tRNA binding"/>
    <property type="evidence" value="ECO:0007669"/>
    <property type="project" value="UniProtKB-KW"/>
</dbReference>
<dbReference type="GO" id="GO:0006431">
    <property type="term" value="P:methionyl-tRNA aminoacylation"/>
    <property type="evidence" value="ECO:0007669"/>
    <property type="project" value="UniProtKB-UniRule"/>
</dbReference>
<dbReference type="CDD" id="cd07957">
    <property type="entry name" value="Anticodon_Ia_Met"/>
    <property type="match status" value="1"/>
</dbReference>
<dbReference type="CDD" id="cd00814">
    <property type="entry name" value="MetRS_core"/>
    <property type="match status" value="1"/>
</dbReference>
<dbReference type="CDD" id="cd02800">
    <property type="entry name" value="tRNA_bind_EcMetRS_like"/>
    <property type="match status" value="1"/>
</dbReference>
<dbReference type="FunFam" id="2.20.28.20:FF:000001">
    <property type="entry name" value="Methionine--tRNA ligase"/>
    <property type="match status" value="1"/>
</dbReference>
<dbReference type="FunFam" id="2.40.50.140:FF:000042">
    <property type="entry name" value="Methionine--tRNA ligase"/>
    <property type="match status" value="1"/>
</dbReference>
<dbReference type="Gene3D" id="3.40.50.620">
    <property type="entry name" value="HUPs"/>
    <property type="match status" value="1"/>
</dbReference>
<dbReference type="Gene3D" id="1.10.730.10">
    <property type="entry name" value="Isoleucyl-tRNA Synthetase, Domain 1"/>
    <property type="match status" value="1"/>
</dbReference>
<dbReference type="Gene3D" id="2.20.28.20">
    <property type="entry name" value="Methionyl-tRNA synthetase, Zn-domain"/>
    <property type="match status" value="1"/>
</dbReference>
<dbReference type="Gene3D" id="2.40.50.140">
    <property type="entry name" value="Nucleic acid-binding proteins"/>
    <property type="match status" value="1"/>
</dbReference>
<dbReference type="HAMAP" id="MF_00098">
    <property type="entry name" value="Met_tRNA_synth_type1"/>
    <property type="match status" value="1"/>
</dbReference>
<dbReference type="InterPro" id="IPR001412">
    <property type="entry name" value="aa-tRNA-synth_I_CS"/>
</dbReference>
<dbReference type="InterPro" id="IPR041872">
    <property type="entry name" value="Anticodon_Met"/>
</dbReference>
<dbReference type="InterPro" id="IPR004495">
    <property type="entry name" value="Met-tRNA-synth_bsu_C"/>
</dbReference>
<dbReference type="InterPro" id="IPR023458">
    <property type="entry name" value="Met-tRNA_ligase_1"/>
</dbReference>
<dbReference type="InterPro" id="IPR014758">
    <property type="entry name" value="Met-tRNA_synth"/>
</dbReference>
<dbReference type="InterPro" id="IPR015413">
    <property type="entry name" value="Methionyl/Leucyl_tRNA_Synth"/>
</dbReference>
<dbReference type="InterPro" id="IPR033911">
    <property type="entry name" value="MetRS_core"/>
</dbReference>
<dbReference type="InterPro" id="IPR029038">
    <property type="entry name" value="MetRS_Zn"/>
</dbReference>
<dbReference type="InterPro" id="IPR012340">
    <property type="entry name" value="NA-bd_OB-fold"/>
</dbReference>
<dbReference type="InterPro" id="IPR014729">
    <property type="entry name" value="Rossmann-like_a/b/a_fold"/>
</dbReference>
<dbReference type="InterPro" id="IPR002547">
    <property type="entry name" value="tRNA-bd_dom"/>
</dbReference>
<dbReference type="InterPro" id="IPR009080">
    <property type="entry name" value="tRNAsynth_Ia_anticodon-bd"/>
</dbReference>
<dbReference type="NCBIfam" id="TIGR00398">
    <property type="entry name" value="metG"/>
    <property type="match status" value="1"/>
</dbReference>
<dbReference type="NCBIfam" id="NF001100">
    <property type="entry name" value="PRK00133.1"/>
    <property type="match status" value="1"/>
</dbReference>
<dbReference type="PANTHER" id="PTHR45765">
    <property type="entry name" value="METHIONINE--TRNA LIGASE"/>
    <property type="match status" value="1"/>
</dbReference>
<dbReference type="PANTHER" id="PTHR45765:SF1">
    <property type="entry name" value="METHIONINE--TRNA LIGASE, CYTOPLASMIC"/>
    <property type="match status" value="1"/>
</dbReference>
<dbReference type="Pfam" id="PF19303">
    <property type="entry name" value="Anticodon_3"/>
    <property type="match status" value="1"/>
</dbReference>
<dbReference type="Pfam" id="PF09334">
    <property type="entry name" value="tRNA-synt_1g"/>
    <property type="match status" value="1"/>
</dbReference>
<dbReference type="Pfam" id="PF01588">
    <property type="entry name" value="tRNA_bind"/>
    <property type="match status" value="1"/>
</dbReference>
<dbReference type="PRINTS" id="PR01041">
    <property type="entry name" value="TRNASYNTHMET"/>
</dbReference>
<dbReference type="SUPFAM" id="SSF47323">
    <property type="entry name" value="Anticodon-binding domain of a subclass of class I aminoacyl-tRNA synthetases"/>
    <property type="match status" value="1"/>
</dbReference>
<dbReference type="SUPFAM" id="SSF57770">
    <property type="entry name" value="Methionyl-tRNA synthetase (MetRS), Zn-domain"/>
    <property type="match status" value="1"/>
</dbReference>
<dbReference type="SUPFAM" id="SSF50249">
    <property type="entry name" value="Nucleic acid-binding proteins"/>
    <property type="match status" value="1"/>
</dbReference>
<dbReference type="SUPFAM" id="SSF52374">
    <property type="entry name" value="Nucleotidylyl transferase"/>
    <property type="match status" value="1"/>
</dbReference>
<dbReference type="PROSITE" id="PS00178">
    <property type="entry name" value="AA_TRNA_LIGASE_I"/>
    <property type="match status" value="1"/>
</dbReference>
<dbReference type="PROSITE" id="PS50886">
    <property type="entry name" value="TRBD"/>
    <property type="match status" value="1"/>
</dbReference>
<sequence length="704" mass="79881">MNSSSIQRKILVTSALPYANGPIHLGHVLEGIQTDIWVRFQKAIGNECYFFCADDTHGTPVMLAARKEKITPEQLIERVGQEHYTDLTSFGINYDNYDSTHSKANQEISKDIYLKLKEKGHISKRSIEQAYCEKDRMFLPDRFIKGTCPNCNSKNQYGDNCEVCGATYNPKDLIDSHCTLCGTPPVVKNSDHIFFKLGNFHKKTEQSNVDFDLQSWIETSEAVSESEGVKKKLKEWFDAGLQDWDISRDGPYFGFEIPSEKNKYFYVWLDAPVGYMASSKNFFEKNFPNEPNKFDSFWKDKNSEIVHFIGKDILYFHTLFWPAMLEGSGYRSPSKIHVHGFIGVNGEKMSKSRGTFIKAKTFAKFLDAEHLRFYLAAKLGPGMDDIDLSFDDFVNKVNADLVGNLINSVSRVSTTILDTLDRTLGTVSEEGLALLEEILTQPVKTGTRDDSIQNIIKTAYEQRNYAKVMREITRLGDRVNRYVNDNAPWKLIKENPEKAREIVTAVLNASRFLAIYLYPVVPKISEQIYKLLNLKGSPEFKDLDKSRILEKTKINPYEMITKRVDEKAIKVMLEENKQSEHPKKEEIPKSSNKEEGIEISIEELSKVELRVGEIVEAKPVEGADKLVNVKVDLGELGIKNVFAGIKIAYQPENLKGLKVVVVANLKPRKMKFGISEAMLLASGEGESLSLFVPHKDAKPGDRLK</sequence>
<name>SYM_LEPBL</name>
<gene>
    <name evidence="1" type="primary">metG</name>
    <name type="ordered locus">LBL_0593</name>
</gene>
<keyword id="KW-0030">Aminoacyl-tRNA synthetase</keyword>
<keyword id="KW-0067">ATP-binding</keyword>
<keyword id="KW-0963">Cytoplasm</keyword>
<keyword id="KW-0436">Ligase</keyword>
<keyword id="KW-0479">Metal-binding</keyword>
<keyword id="KW-0547">Nucleotide-binding</keyword>
<keyword id="KW-0648">Protein biosynthesis</keyword>
<keyword id="KW-0694">RNA-binding</keyword>
<keyword id="KW-0820">tRNA-binding</keyword>
<keyword id="KW-0862">Zinc</keyword>
<organism>
    <name type="scientific">Leptospira borgpetersenii serovar Hardjo-bovis (strain L550)</name>
    <dbReference type="NCBI Taxonomy" id="355276"/>
    <lineage>
        <taxon>Bacteria</taxon>
        <taxon>Pseudomonadati</taxon>
        <taxon>Spirochaetota</taxon>
        <taxon>Spirochaetia</taxon>
        <taxon>Leptospirales</taxon>
        <taxon>Leptospiraceae</taxon>
        <taxon>Leptospira</taxon>
    </lineage>
</organism>
<protein>
    <recommendedName>
        <fullName evidence="1">Methionine--tRNA ligase</fullName>
        <ecNumber evidence="1">6.1.1.10</ecNumber>
    </recommendedName>
    <alternativeName>
        <fullName evidence="1">Methionyl-tRNA synthetase</fullName>
        <shortName evidence="1">MetRS</shortName>
    </alternativeName>
</protein>